<name>SYDND_BRADU</name>
<organism>
    <name type="scientific">Bradyrhizobium diazoefficiens (strain JCM 10833 / BCRC 13528 / IAM 13628 / NBRC 14792 / USDA 110)</name>
    <dbReference type="NCBI Taxonomy" id="224911"/>
    <lineage>
        <taxon>Bacteria</taxon>
        <taxon>Pseudomonadati</taxon>
        <taxon>Pseudomonadota</taxon>
        <taxon>Alphaproteobacteria</taxon>
        <taxon>Hyphomicrobiales</taxon>
        <taxon>Nitrobacteraceae</taxon>
        <taxon>Bradyrhizobium</taxon>
    </lineage>
</organism>
<reference key="1">
    <citation type="journal article" date="2002" name="DNA Res.">
        <title>Complete genomic sequence of nitrogen-fixing symbiotic bacterium Bradyrhizobium japonicum USDA110.</title>
        <authorList>
            <person name="Kaneko T."/>
            <person name="Nakamura Y."/>
            <person name="Sato S."/>
            <person name="Minamisawa K."/>
            <person name="Uchiumi T."/>
            <person name="Sasamoto S."/>
            <person name="Watanabe A."/>
            <person name="Idesawa K."/>
            <person name="Iriguchi M."/>
            <person name="Kawashima K."/>
            <person name="Kohara M."/>
            <person name="Matsumoto M."/>
            <person name="Shimpo S."/>
            <person name="Tsuruoka H."/>
            <person name="Wada T."/>
            <person name="Yamada M."/>
            <person name="Tabata S."/>
        </authorList>
    </citation>
    <scope>NUCLEOTIDE SEQUENCE [LARGE SCALE GENOMIC DNA]</scope>
    <source>
        <strain>JCM 10833 / BCRC 13528 / IAM 13628 / NBRC 14792 / USDA 110</strain>
    </source>
</reference>
<protein>
    <recommendedName>
        <fullName evidence="1">Aspartate--tRNA(Asp/Asn) ligase</fullName>
        <ecNumber evidence="1">6.1.1.23</ecNumber>
    </recommendedName>
    <alternativeName>
        <fullName evidence="1">Aspartyl-tRNA synthetase</fullName>
        <shortName evidence="1">AspRS</shortName>
    </alternativeName>
    <alternativeName>
        <fullName evidence="1">Non-discriminating aspartyl-tRNA synthetase</fullName>
        <shortName evidence="1">ND-AspRS</shortName>
    </alternativeName>
</protein>
<comment type="function">
    <text evidence="1">Aspartyl-tRNA synthetase with relaxed tRNA specificity since it is able to aspartylate not only its cognate tRNA(Asp) but also tRNA(Asn). Reaction proceeds in two steps: L-aspartate is first activated by ATP to form Asp-AMP and then transferred to the acceptor end of tRNA(Asp/Asn).</text>
</comment>
<comment type="catalytic activity">
    <reaction evidence="1">
        <text>tRNA(Asx) + L-aspartate + ATP = L-aspartyl-tRNA(Asx) + AMP + diphosphate</text>
        <dbReference type="Rhea" id="RHEA:18349"/>
        <dbReference type="Rhea" id="RHEA-COMP:9710"/>
        <dbReference type="Rhea" id="RHEA-COMP:9711"/>
        <dbReference type="ChEBI" id="CHEBI:29991"/>
        <dbReference type="ChEBI" id="CHEBI:30616"/>
        <dbReference type="ChEBI" id="CHEBI:33019"/>
        <dbReference type="ChEBI" id="CHEBI:78442"/>
        <dbReference type="ChEBI" id="CHEBI:78516"/>
        <dbReference type="ChEBI" id="CHEBI:456215"/>
        <dbReference type="EC" id="6.1.1.23"/>
    </reaction>
</comment>
<comment type="subunit">
    <text evidence="1">Homodimer.</text>
</comment>
<comment type="subcellular location">
    <subcellularLocation>
        <location evidence="1">Cytoplasm</location>
    </subcellularLocation>
</comment>
<comment type="similarity">
    <text evidence="1">Belongs to the class-II aminoacyl-tRNA synthetase family. Type 1 subfamily.</text>
</comment>
<keyword id="KW-0030">Aminoacyl-tRNA synthetase</keyword>
<keyword id="KW-0067">ATP-binding</keyword>
<keyword id="KW-0963">Cytoplasm</keyword>
<keyword id="KW-0436">Ligase</keyword>
<keyword id="KW-0547">Nucleotide-binding</keyword>
<keyword id="KW-0648">Protein biosynthesis</keyword>
<keyword id="KW-1185">Reference proteome</keyword>
<sequence>MHRYRSHTCGALRESNIGETIRLSGWVHRVRDHGGVLFIDLRDHYGLTQCVVDPDSPAFSLAEKLRSEFVIKMDGKVRRRPEGTDNDDLPTGKIEIYVSEIEVLGPAGDLPLPVFGDQEYPEDIRLKYRFLDLRREKLHQNIMTRVEIIKSMRRRMEGQGFFEFNTPILTASSPEGARDFLVPSRIHPGKFYALPQAPQQYKQLLMMSGFDRYFQIAPCFRDEDPRADRLPGEFYQLDVEMSFVTQEDVFAAMEPVITGVFEEFAKGKPVSKNWRRIPFAEALRKYGSDKPDLRNPIEMQEVSEHFRGSGFKVFARMLEDPKNQVWAIPAPGGGSRAFCDRMNSWAQGEGQPGLGYIMWREGGEGAGPLANNIGPERTAAIRAQIGVKEGDAAFFVAGDPDKFWKFSGLARNKVGEELNLTDKERFELAWIVDFPMYEYNEDDKKVDFSHNPFSMPQGGLEALKGQDPLTIKAFQYDITCNGYEIASGGIRNHVPEAMVKAFEIAGYGEQEVVDRFGGMYRAFQYGAPPHGGMAAGVDRIVMLLCGTTNLREISLFPMNQQAMDLLMGAPSEATTKQLRELHVRVNLPQK</sequence>
<proteinExistence type="inferred from homology"/>
<feature type="chain" id="PRO_0000110840" description="Aspartate--tRNA(Asp/Asn) ligase">
    <location>
        <begin position="1"/>
        <end position="590"/>
    </location>
</feature>
<feature type="region of interest" description="Aspartate" evidence="1">
    <location>
        <begin position="199"/>
        <end position="202"/>
    </location>
</feature>
<feature type="binding site" evidence="1">
    <location>
        <position position="175"/>
    </location>
    <ligand>
        <name>L-aspartate</name>
        <dbReference type="ChEBI" id="CHEBI:29991"/>
    </ligand>
</feature>
<feature type="binding site" evidence="1">
    <location>
        <begin position="221"/>
        <end position="223"/>
    </location>
    <ligand>
        <name>ATP</name>
        <dbReference type="ChEBI" id="CHEBI:30616"/>
    </ligand>
</feature>
<feature type="binding site" evidence="1">
    <location>
        <position position="221"/>
    </location>
    <ligand>
        <name>L-aspartate</name>
        <dbReference type="ChEBI" id="CHEBI:29991"/>
    </ligand>
</feature>
<feature type="binding site" evidence="1">
    <location>
        <position position="450"/>
    </location>
    <ligand>
        <name>L-aspartate</name>
        <dbReference type="ChEBI" id="CHEBI:29991"/>
    </ligand>
</feature>
<feature type="binding site" evidence="1">
    <location>
        <position position="484"/>
    </location>
    <ligand>
        <name>ATP</name>
        <dbReference type="ChEBI" id="CHEBI:30616"/>
    </ligand>
</feature>
<feature type="binding site" evidence="1">
    <location>
        <position position="491"/>
    </location>
    <ligand>
        <name>L-aspartate</name>
        <dbReference type="ChEBI" id="CHEBI:29991"/>
    </ligand>
</feature>
<feature type="binding site" evidence="1">
    <location>
        <begin position="536"/>
        <end position="539"/>
    </location>
    <ligand>
        <name>ATP</name>
        <dbReference type="ChEBI" id="CHEBI:30616"/>
    </ligand>
</feature>
<feature type="site" description="Important for tRNA non-discrimination" evidence="1">
    <location>
        <position position="33"/>
    </location>
</feature>
<feature type="site" description="Important for tRNA non-discrimination" evidence="1">
    <location>
        <position position="83"/>
    </location>
</feature>
<evidence type="ECO:0000255" key="1">
    <source>
        <dbReference type="HAMAP-Rule" id="MF_00044"/>
    </source>
</evidence>
<dbReference type="EC" id="6.1.1.23" evidence="1"/>
<dbReference type="EMBL" id="BA000040">
    <property type="protein sequence ID" value="BAC49408.1"/>
    <property type="molecule type" value="Genomic_DNA"/>
</dbReference>
<dbReference type="RefSeq" id="NP_770783.1">
    <property type="nucleotide sequence ID" value="NC_004463.1"/>
</dbReference>
<dbReference type="RefSeq" id="WP_011086916.1">
    <property type="nucleotide sequence ID" value="NC_004463.1"/>
</dbReference>
<dbReference type="SMR" id="Q89MP9"/>
<dbReference type="FunCoup" id="Q89MP9">
    <property type="interactions" value="747"/>
</dbReference>
<dbReference type="STRING" id="224911.AAV28_17750"/>
<dbReference type="EnsemblBacteria" id="BAC49408">
    <property type="protein sequence ID" value="BAC49408"/>
    <property type="gene ID" value="BAC49408"/>
</dbReference>
<dbReference type="GeneID" id="46491143"/>
<dbReference type="KEGG" id="bja:blr4143"/>
<dbReference type="PATRIC" id="fig|224911.44.peg.3857"/>
<dbReference type="eggNOG" id="COG0173">
    <property type="taxonomic scope" value="Bacteria"/>
</dbReference>
<dbReference type="HOGENOM" id="CLU_014330_3_2_5"/>
<dbReference type="InParanoid" id="Q89MP9"/>
<dbReference type="OrthoDB" id="9802326at2"/>
<dbReference type="PhylomeDB" id="Q89MP9"/>
<dbReference type="Proteomes" id="UP000002526">
    <property type="component" value="Chromosome"/>
</dbReference>
<dbReference type="GO" id="GO:0005737">
    <property type="term" value="C:cytoplasm"/>
    <property type="evidence" value="ECO:0007669"/>
    <property type="project" value="UniProtKB-SubCell"/>
</dbReference>
<dbReference type="GO" id="GO:0004815">
    <property type="term" value="F:aspartate-tRNA ligase activity"/>
    <property type="evidence" value="ECO:0000318"/>
    <property type="project" value="GO_Central"/>
</dbReference>
<dbReference type="GO" id="GO:0050560">
    <property type="term" value="F:aspartate-tRNA(Asn) ligase activity"/>
    <property type="evidence" value="ECO:0007669"/>
    <property type="project" value="UniProtKB-EC"/>
</dbReference>
<dbReference type="GO" id="GO:0005524">
    <property type="term" value="F:ATP binding"/>
    <property type="evidence" value="ECO:0007669"/>
    <property type="project" value="UniProtKB-UniRule"/>
</dbReference>
<dbReference type="GO" id="GO:0003676">
    <property type="term" value="F:nucleic acid binding"/>
    <property type="evidence" value="ECO:0007669"/>
    <property type="project" value="InterPro"/>
</dbReference>
<dbReference type="GO" id="GO:0006422">
    <property type="term" value="P:aspartyl-tRNA aminoacylation"/>
    <property type="evidence" value="ECO:0000318"/>
    <property type="project" value="GO_Central"/>
</dbReference>
<dbReference type="CDD" id="cd00777">
    <property type="entry name" value="AspRS_core"/>
    <property type="match status" value="1"/>
</dbReference>
<dbReference type="CDD" id="cd04317">
    <property type="entry name" value="EcAspRS_like_N"/>
    <property type="match status" value="1"/>
</dbReference>
<dbReference type="Gene3D" id="3.30.930.10">
    <property type="entry name" value="Bira Bifunctional Protein, Domain 2"/>
    <property type="match status" value="1"/>
</dbReference>
<dbReference type="Gene3D" id="3.30.1360.30">
    <property type="entry name" value="GAD-like domain"/>
    <property type="match status" value="1"/>
</dbReference>
<dbReference type="Gene3D" id="2.40.50.140">
    <property type="entry name" value="Nucleic acid-binding proteins"/>
    <property type="match status" value="1"/>
</dbReference>
<dbReference type="HAMAP" id="MF_00044">
    <property type="entry name" value="Asp_tRNA_synth_type1"/>
    <property type="match status" value="1"/>
</dbReference>
<dbReference type="InterPro" id="IPR004364">
    <property type="entry name" value="Aa-tRNA-synt_II"/>
</dbReference>
<dbReference type="InterPro" id="IPR006195">
    <property type="entry name" value="aa-tRNA-synth_II"/>
</dbReference>
<dbReference type="InterPro" id="IPR045864">
    <property type="entry name" value="aa-tRNA-synth_II/BPL/LPL"/>
</dbReference>
<dbReference type="InterPro" id="IPR004524">
    <property type="entry name" value="Asp-tRNA-ligase_1"/>
</dbReference>
<dbReference type="InterPro" id="IPR047089">
    <property type="entry name" value="Asp-tRNA-ligase_1_N"/>
</dbReference>
<dbReference type="InterPro" id="IPR002312">
    <property type="entry name" value="Asp/Asn-tRNA-synth_IIb"/>
</dbReference>
<dbReference type="InterPro" id="IPR047090">
    <property type="entry name" value="AspRS_core"/>
</dbReference>
<dbReference type="InterPro" id="IPR004115">
    <property type="entry name" value="GAD-like_sf"/>
</dbReference>
<dbReference type="InterPro" id="IPR029351">
    <property type="entry name" value="GAD_dom"/>
</dbReference>
<dbReference type="InterPro" id="IPR012340">
    <property type="entry name" value="NA-bd_OB-fold"/>
</dbReference>
<dbReference type="InterPro" id="IPR004365">
    <property type="entry name" value="NA-bd_OB_tRNA"/>
</dbReference>
<dbReference type="NCBIfam" id="TIGR00459">
    <property type="entry name" value="aspS_bact"/>
    <property type="match status" value="1"/>
</dbReference>
<dbReference type="NCBIfam" id="NF001750">
    <property type="entry name" value="PRK00476.1"/>
    <property type="match status" value="1"/>
</dbReference>
<dbReference type="PANTHER" id="PTHR22594:SF5">
    <property type="entry name" value="ASPARTATE--TRNA LIGASE, MITOCHONDRIAL"/>
    <property type="match status" value="1"/>
</dbReference>
<dbReference type="PANTHER" id="PTHR22594">
    <property type="entry name" value="ASPARTYL/LYSYL-TRNA SYNTHETASE"/>
    <property type="match status" value="1"/>
</dbReference>
<dbReference type="Pfam" id="PF02938">
    <property type="entry name" value="GAD"/>
    <property type="match status" value="1"/>
</dbReference>
<dbReference type="Pfam" id="PF00152">
    <property type="entry name" value="tRNA-synt_2"/>
    <property type="match status" value="1"/>
</dbReference>
<dbReference type="Pfam" id="PF01336">
    <property type="entry name" value="tRNA_anti-codon"/>
    <property type="match status" value="1"/>
</dbReference>
<dbReference type="PRINTS" id="PR01042">
    <property type="entry name" value="TRNASYNTHASP"/>
</dbReference>
<dbReference type="SUPFAM" id="SSF55681">
    <property type="entry name" value="Class II aaRS and biotin synthetases"/>
    <property type="match status" value="1"/>
</dbReference>
<dbReference type="SUPFAM" id="SSF55261">
    <property type="entry name" value="GAD domain-like"/>
    <property type="match status" value="1"/>
</dbReference>
<dbReference type="SUPFAM" id="SSF50249">
    <property type="entry name" value="Nucleic acid-binding proteins"/>
    <property type="match status" value="1"/>
</dbReference>
<dbReference type="PROSITE" id="PS50862">
    <property type="entry name" value="AA_TRNA_LIGASE_II"/>
    <property type="match status" value="1"/>
</dbReference>
<gene>
    <name evidence="1" type="primary">aspS</name>
    <name type="ordered locus">blr4143</name>
</gene>
<accession>Q89MP9</accession>